<reference key="1">
    <citation type="journal article" date="1990" name="J. Bacteriol.">
        <title>Genetic and sequence analysis of an 8.7-kilobase Pseudomonas denitrificans fragment carrying eight genes involved in transformation of precorrin-2 to cobyrinic acid.</title>
        <authorList>
            <person name="Crouzet J."/>
            <person name="Cameron B."/>
            <person name="Cauchois L."/>
            <person name="Rigault S."/>
            <person name="Rouyez M.-C."/>
            <person name="Blanche F."/>
            <person name="Thibaut D."/>
            <person name="Debussche L."/>
        </authorList>
    </citation>
    <scope>NUCLEOTIDE SEQUENCE [GENOMIC DNA]</scope>
    <scope>PROTEIN SEQUENCE OF 2-18</scope>
    <source>
        <strain>SC510</strain>
    </source>
</reference>
<gene>
    <name type="primary">cobI</name>
</gene>
<organism>
    <name type="scientific">Sinorhizobium sp</name>
    <dbReference type="NCBI Taxonomy" id="42445"/>
    <lineage>
        <taxon>Bacteria</taxon>
        <taxon>Pseudomonadati</taxon>
        <taxon>Pseudomonadota</taxon>
        <taxon>Alphaproteobacteria</taxon>
        <taxon>Hyphomicrobiales</taxon>
        <taxon>Rhizobiaceae</taxon>
        <taxon>Sinorhizobium/Ensifer group</taxon>
        <taxon>Sinorhizobium</taxon>
    </lineage>
</organism>
<accession>P21639</accession>
<dbReference type="EC" id="2.1.1.130"/>
<dbReference type="EMBL" id="M59301">
    <property type="protein sequence ID" value="AAA25797.1"/>
    <property type="molecule type" value="Genomic_DNA"/>
</dbReference>
<dbReference type="SMR" id="P21639"/>
<dbReference type="BioCyc" id="MetaCyc:MONOMER-83"/>
<dbReference type="UniPathway" id="UPA00148">
    <property type="reaction ID" value="UER00212"/>
</dbReference>
<dbReference type="GO" id="GO:0030788">
    <property type="term" value="F:precorrin-2 C20-methyltransferase activity"/>
    <property type="evidence" value="ECO:0007669"/>
    <property type="project" value="UniProtKB-EC"/>
</dbReference>
<dbReference type="GO" id="GO:0009236">
    <property type="term" value="P:cobalamin biosynthetic process"/>
    <property type="evidence" value="ECO:0007669"/>
    <property type="project" value="UniProtKB-UniPathway"/>
</dbReference>
<dbReference type="GO" id="GO:0032259">
    <property type="term" value="P:methylation"/>
    <property type="evidence" value="ECO:0007669"/>
    <property type="project" value="UniProtKB-KW"/>
</dbReference>
<dbReference type="CDD" id="cd11645">
    <property type="entry name" value="Precorrin_2_C20_MT"/>
    <property type="match status" value="1"/>
</dbReference>
<dbReference type="Gene3D" id="3.40.1010.10">
    <property type="entry name" value="Cobalt-precorrin-4 Transmethylase, Domain 1"/>
    <property type="match status" value="1"/>
</dbReference>
<dbReference type="Gene3D" id="3.30.950.10">
    <property type="entry name" value="Methyltransferase, Cobalt-precorrin-4 Transmethylase, Domain 2"/>
    <property type="match status" value="1"/>
</dbReference>
<dbReference type="InterPro" id="IPR000878">
    <property type="entry name" value="4pyrrol_Mease"/>
</dbReference>
<dbReference type="InterPro" id="IPR035996">
    <property type="entry name" value="4pyrrol_Methylase_sf"/>
</dbReference>
<dbReference type="InterPro" id="IPR014777">
    <property type="entry name" value="4pyrrole_Mease_sub1"/>
</dbReference>
<dbReference type="InterPro" id="IPR014776">
    <property type="entry name" value="4pyrrole_Mease_sub2"/>
</dbReference>
<dbReference type="InterPro" id="IPR012382">
    <property type="entry name" value="CobI/CbiL"/>
</dbReference>
<dbReference type="InterPro" id="IPR006364">
    <property type="entry name" value="CobI/CbiL/CobIJ_dom"/>
</dbReference>
<dbReference type="InterPro" id="IPR003043">
    <property type="entry name" value="Uropor_MeTrfase_CS"/>
</dbReference>
<dbReference type="NCBIfam" id="TIGR01467">
    <property type="entry name" value="cobI_cbiL"/>
    <property type="match status" value="1"/>
</dbReference>
<dbReference type="NCBIfam" id="NF004647">
    <property type="entry name" value="PRK05990.1"/>
    <property type="match status" value="1"/>
</dbReference>
<dbReference type="PANTHER" id="PTHR43467">
    <property type="entry name" value="COBALT-PRECORRIN-2 C(20)-METHYLTRANSFERASE"/>
    <property type="match status" value="1"/>
</dbReference>
<dbReference type="PANTHER" id="PTHR43467:SF2">
    <property type="entry name" value="COBALT-PRECORRIN-2 C(20)-METHYLTRANSFERASE"/>
    <property type="match status" value="1"/>
</dbReference>
<dbReference type="Pfam" id="PF00590">
    <property type="entry name" value="TP_methylase"/>
    <property type="match status" value="1"/>
</dbReference>
<dbReference type="PIRSF" id="PIRSF036427">
    <property type="entry name" value="Precrrn-2_mtase"/>
    <property type="match status" value="1"/>
</dbReference>
<dbReference type="SUPFAM" id="SSF53790">
    <property type="entry name" value="Tetrapyrrole methylase"/>
    <property type="match status" value="1"/>
</dbReference>
<dbReference type="PROSITE" id="PS00839">
    <property type="entry name" value="SUMT_1"/>
    <property type="match status" value="1"/>
</dbReference>
<dbReference type="PROSITE" id="PS00840">
    <property type="entry name" value="SUMT_2"/>
    <property type="match status" value="1"/>
</dbReference>
<proteinExistence type="evidence at protein level"/>
<keyword id="KW-0169">Cobalamin biosynthesis</keyword>
<keyword id="KW-0903">Direct protein sequencing</keyword>
<keyword id="KW-0489">Methyltransferase</keyword>
<keyword id="KW-0949">S-adenosyl-L-methionine</keyword>
<keyword id="KW-0808">Transferase</keyword>
<comment type="function">
    <text>Methylates precorrin-2 at the C-20 position to produce precorrin-3A.</text>
</comment>
<comment type="catalytic activity">
    <reaction>
        <text>precorrin-2 + S-adenosyl-L-methionine = precorrin-3A + S-adenosyl-L-homocysteine + H(+)</text>
        <dbReference type="Rhea" id="RHEA:16841"/>
        <dbReference type="ChEBI" id="CHEBI:15378"/>
        <dbReference type="ChEBI" id="CHEBI:57856"/>
        <dbReference type="ChEBI" id="CHEBI:58561"/>
        <dbReference type="ChEBI" id="CHEBI:58827"/>
        <dbReference type="ChEBI" id="CHEBI:59789"/>
        <dbReference type="EC" id="2.1.1.130"/>
    </reaction>
</comment>
<comment type="pathway">
    <text>Cofactor biosynthesis; adenosylcobalamin biosynthesis; cob(II)yrinate a,c-diamide from precorrin-2 (aerobic route): step 1/10.</text>
</comment>
<comment type="subunit">
    <text>Homodimer.</text>
</comment>
<comment type="similarity">
    <text evidence="2">Belongs to the precorrin methyltransferase family.</text>
</comment>
<comment type="caution">
    <text evidence="2">Was originally thought to originate from Pseudomonas denitrificans, but similarity searches show that the sequence is much closer to Sinorhizobium. The entry's taxonomy has been changed.</text>
</comment>
<protein>
    <recommendedName>
        <fullName>Precorrin-2 C(20)-methyltransferase</fullName>
        <ecNumber>2.1.1.130</ecNumber>
    </recommendedName>
    <alternativeName>
        <fullName>S-adenosyl-L-methionine--precorrin-2 methyltransferase</fullName>
        <shortName>SP2MT</shortName>
    </alternativeName>
</protein>
<feature type="initiator methionine" description="Removed" evidence="1">
    <location>
        <position position="1"/>
    </location>
</feature>
<feature type="chain" id="PRO_0000150389" description="Precorrin-2 C(20)-methyltransferase">
    <location>
        <begin position="2"/>
        <end position="245"/>
    </location>
</feature>
<sequence>MSGVGVGRLIGVGTGPGDPELLTVKAVKALGQADVLAYFAKAGRSGNGRAVVEGLLKPDLVELPLYYPVTTEIDKDDGAYKTQITDFYNASAEAVAAHLAAGRTVAVLSEGDPLFYGSYMHLHVRLANRFPVEVIPGITAMSGCWSLAGLPLVQGDDVLSVLPGTMAEAELGRRLADTEAAVIMKVGRNLPKIRRALAASGRLDQAVYVERGTMKNAAMTALAEKADDEAPYFSLVLVPGWKDRP</sequence>
<evidence type="ECO:0000269" key="1">
    <source>
    </source>
</evidence>
<evidence type="ECO:0000305" key="2"/>
<name>COBI_SINSX</name>